<geneLocation type="mitochondrion"/>
<name>CYB_GLYDA</name>
<keyword id="KW-0249">Electron transport</keyword>
<keyword id="KW-0349">Heme</keyword>
<keyword id="KW-0408">Iron</keyword>
<keyword id="KW-0472">Membrane</keyword>
<keyword id="KW-0479">Metal-binding</keyword>
<keyword id="KW-0496">Mitochondrion</keyword>
<keyword id="KW-0999">Mitochondrion inner membrane</keyword>
<keyword id="KW-0679">Respiratory chain</keyword>
<keyword id="KW-0812">Transmembrane</keyword>
<keyword id="KW-1133">Transmembrane helix</keyword>
<keyword id="KW-0813">Transport</keyword>
<keyword id="KW-0830">Ubiquinone</keyword>
<sequence>MTNIRKTHPLLKIINSSFVDLPAPSSLSSWWNFGSLLGVCLAVQILTGLFLAMHYTSDTTTAFNSVAHICRDVNYGWLLRYLHANGASMFFICLYLHIGRGLYYGSYTYSETWNIGILLLFAVMATAFMGYVLPWGQMSFWGATVITNLLSAIPYIGTDLVQWIWGGFSVDKATLTRFFAFHFLLPFIVTALVMVHLLFLHETGSNNPTGISSDSDMIPFHPYYTIKDILGLLIMLAILSALVLFSPDLLGDPDNYTPANPLNTPPHIKPEWYFLFAYANLRSIPNKLGGVLALVMSILILAIVPALHTSKQRSMMFRPLSQCLFWLLVTVLLTLTWIGGQPVENPFIIIGQVASILYFLILLILMPLTSIIENYLLKW</sequence>
<protein>
    <recommendedName>
        <fullName>Cytochrome b</fullName>
    </recommendedName>
    <alternativeName>
        <fullName>Complex III subunit 3</fullName>
    </alternativeName>
    <alternativeName>
        <fullName>Complex III subunit III</fullName>
    </alternativeName>
    <alternativeName>
        <fullName>Cytochrome b-c1 complex subunit 3</fullName>
    </alternativeName>
    <alternativeName>
        <fullName>Ubiquinol-cytochrome-c reductase complex cytochrome b subunit</fullName>
    </alternativeName>
</protein>
<feature type="chain" id="PRO_0000254805" description="Cytochrome b">
    <location>
        <begin position="1"/>
        <end position="379"/>
    </location>
</feature>
<feature type="transmembrane region" description="Helical" evidence="2">
    <location>
        <begin position="33"/>
        <end position="53"/>
    </location>
</feature>
<feature type="transmembrane region" description="Helical" evidence="2">
    <location>
        <begin position="77"/>
        <end position="98"/>
    </location>
</feature>
<feature type="transmembrane region" description="Helical" evidence="2">
    <location>
        <begin position="113"/>
        <end position="133"/>
    </location>
</feature>
<feature type="transmembrane region" description="Helical" evidence="2">
    <location>
        <begin position="178"/>
        <end position="198"/>
    </location>
</feature>
<feature type="transmembrane region" description="Helical" evidence="2">
    <location>
        <begin position="226"/>
        <end position="246"/>
    </location>
</feature>
<feature type="transmembrane region" description="Helical" evidence="2">
    <location>
        <begin position="288"/>
        <end position="308"/>
    </location>
</feature>
<feature type="transmembrane region" description="Helical" evidence="2">
    <location>
        <begin position="320"/>
        <end position="340"/>
    </location>
</feature>
<feature type="transmembrane region" description="Helical" evidence="2">
    <location>
        <begin position="347"/>
        <end position="367"/>
    </location>
</feature>
<feature type="binding site" description="axial binding residue" evidence="2">
    <location>
        <position position="83"/>
    </location>
    <ligand>
        <name>heme b</name>
        <dbReference type="ChEBI" id="CHEBI:60344"/>
        <label>b562</label>
    </ligand>
    <ligandPart>
        <name>Fe</name>
        <dbReference type="ChEBI" id="CHEBI:18248"/>
    </ligandPart>
</feature>
<feature type="binding site" description="axial binding residue" evidence="2">
    <location>
        <position position="97"/>
    </location>
    <ligand>
        <name>heme b</name>
        <dbReference type="ChEBI" id="CHEBI:60344"/>
        <label>b566</label>
    </ligand>
    <ligandPart>
        <name>Fe</name>
        <dbReference type="ChEBI" id="CHEBI:18248"/>
    </ligandPart>
</feature>
<feature type="binding site" description="axial binding residue" evidence="2">
    <location>
        <position position="182"/>
    </location>
    <ligand>
        <name>heme b</name>
        <dbReference type="ChEBI" id="CHEBI:60344"/>
        <label>b562</label>
    </ligand>
    <ligandPart>
        <name>Fe</name>
        <dbReference type="ChEBI" id="CHEBI:18248"/>
    </ligandPart>
</feature>
<feature type="binding site" description="axial binding residue" evidence="2">
    <location>
        <position position="196"/>
    </location>
    <ligand>
        <name>heme b</name>
        <dbReference type="ChEBI" id="CHEBI:60344"/>
        <label>b566</label>
    </ligand>
    <ligandPart>
        <name>Fe</name>
        <dbReference type="ChEBI" id="CHEBI:18248"/>
    </ligandPart>
</feature>
<feature type="binding site" evidence="2">
    <location>
        <position position="201"/>
    </location>
    <ligand>
        <name>a ubiquinone</name>
        <dbReference type="ChEBI" id="CHEBI:16389"/>
    </ligand>
</feature>
<evidence type="ECO:0000250" key="1"/>
<evidence type="ECO:0000250" key="2">
    <source>
        <dbReference type="UniProtKB" id="P00157"/>
    </source>
</evidence>
<evidence type="ECO:0000255" key="3">
    <source>
        <dbReference type="PROSITE-ProRule" id="PRU00967"/>
    </source>
</evidence>
<evidence type="ECO:0000255" key="4">
    <source>
        <dbReference type="PROSITE-ProRule" id="PRU00968"/>
    </source>
</evidence>
<dbReference type="EMBL" id="AY380747">
    <property type="protein sequence ID" value="AAR91760.1"/>
    <property type="molecule type" value="Genomic_DNA"/>
</dbReference>
<dbReference type="SMR" id="Q597E9"/>
<dbReference type="GO" id="GO:0005743">
    <property type="term" value="C:mitochondrial inner membrane"/>
    <property type="evidence" value="ECO:0007669"/>
    <property type="project" value="UniProtKB-SubCell"/>
</dbReference>
<dbReference type="GO" id="GO:0045275">
    <property type="term" value="C:respiratory chain complex III"/>
    <property type="evidence" value="ECO:0007669"/>
    <property type="project" value="InterPro"/>
</dbReference>
<dbReference type="GO" id="GO:0046872">
    <property type="term" value="F:metal ion binding"/>
    <property type="evidence" value="ECO:0007669"/>
    <property type="project" value="UniProtKB-KW"/>
</dbReference>
<dbReference type="GO" id="GO:0008121">
    <property type="term" value="F:ubiquinol-cytochrome-c reductase activity"/>
    <property type="evidence" value="ECO:0007669"/>
    <property type="project" value="InterPro"/>
</dbReference>
<dbReference type="GO" id="GO:0006122">
    <property type="term" value="P:mitochondrial electron transport, ubiquinol to cytochrome c"/>
    <property type="evidence" value="ECO:0007669"/>
    <property type="project" value="TreeGrafter"/>
</dbReference>
<dbReference type="CDD" id="cd00290">
    <property type="entry name" value="cytochrome_b_C"/>
    <property type="match status" value="1"/>
</dbReference>
<dbReference type="CDD" id="cd00284">
    <property type="entry name" value="Cytochrome_b_N"/>
    <property type="match status" value="1"/>
</dbReference>
<dbReference type="FunFam" id="1.20.810.10:FF:000002">
    <property type="entry name" value="Cytochrome b"/>
    <property type="match status" value="1"/>
</dbReference>
<dbReference type="Gene3D" id="1.20.810.10">
    <property type="entry name" value="Cytochrome Bc1 Complex, Chain C"/>
    <property type="match status" value="1"/>
</dbReference>
<dbReference type="InterPro" id="IPR005798">
    <property type="entry name" value="Cyt_b/b6_C"/>
</dbReference>
<dbReference type="InterPro" id="IPR036150">
    <property type="entry name" value="Cyt_b/b6_C_sf"/>
</dbReference>
<dbReference type="InterPro" id="IPR005797">
    <property type="entry name" value="Cyt_b/b6_N"/>
</dbReference>
<dbReference type="InterPro" id="IPR027387">
    <property type="entry name" value="Cytb/b6-like_sf"/>
</dbReference>
<dbReference type="InterPro" id="IPR030689">
    <property type="entry name" value="Cytochrome_b"/>
</dbReference>
<dbReference type="InterPro" id="IPR048260">
    <property type="entry name" value="Cytochrome_b_C_euk/bac"/>
</dbReference>
<dbReference type="InterPro" id="IPR048259">
    <property type="entry name" value="Cytochrome_b_N_euk/bac"/>
</dbReference>
<dbReference type="InterPro" id="IPR016174">
    <property type="entry name" value="Di-haem_cyt_TM"/>
</dbReference>
<dbReference type="PANTHER" id="PTHR19271">
    <property type="entry name" value="CYTOCHROME B"/>
    <property type="match status" value="1"/>
</dbReference>
<dbReference type="PANTHER" id="PTHR19271:SF16">
    <property type="entry name" value="CYTOCHROME B"/>
    <property type="match status" value="1"/>
</dbReference>
<dbReference type="Pfam" id="PF00032">
    <property type="entry name" value="Cytochrom_B_C"/>
    <property type="match status" value="1"/>
</dbReference>
<dbReference type="Pfam" id="PF00033">
    <property type="entry name" value="Cytochrome_B"/>
    <property type="match status" value="1"/>
</dbReference>
<dbReference type="PIRSF" id="PIRSF038885">
    <property type="entry name" value="COB"/>
    <property type="match status" value="1"/>
</dbReference>
<dbReference type="SUPFAM" id="SSF81648">
    <property type="entry name" value="a domain/subunit of cytochrome bc1 complex (Ubiquinol-cytochrome c reductase)"/>
    <property type="match status" value="1"/>
</dbReference>
<dbReference type="SUPFAM" id="SSF81342">
    <property type="entry name" value="Transmembrane di-heme cytochromes"/>
    <property type="match status" value="1"/>
</dbReference>
<dbReference type="PROSITE" id="PS51003">
    <property type="entry name" value="CYTB_CTER"/>
    <property type="match status" value="1"/>
</dbReference>
<dbReference type="PROSITE" id="PS51002">
    <property type="entry name" value="CYTB_NTER"/>
    <property type="match status" value="1"/>
</dbReference>
<comment type="function">
    <text evidence="2">Component of the ubiquinol-cytochrome c reductase complex (complex III or cytochrome b-c1 complex) that is part of the mitochondrial respiratory chain. The b-c1 complex mediates electron transfer from ubiquinol to cytochrome c. Contributes to the generation of a proton gradient across the mitochondrial membrane that is then used for ATP synthesis.</text>
</comment>
<comment type="cofactor">
    <cofactor evidence="2">
        <name>heme b</name>
        <dbReference type="ChEBI" id="CHEBI:60344"/>
    </cofactor>
    <text evidence="2">Binds 2 heme b groups non-covalently.</text>
</comment>
<comment type="subunit">
    <text evidence="2">The cytochrome bc1 complex contains 11 subunits: 3 respiratory subunits (MT-CYB, CYC1 and UQCRFS1), 2 core proteins (UQCRC1 and UQCRC2) and 6 low-molecular weight proteins (UQCRH/QCR6, UQCRB/QCR7, UQCRQ/QCR8, UQCR10/QCR9, UQCR11/QCR10 and a cleavage product of UQCRFS1). This cytochrome bc1 complex then forms a dimer.</text>
</comment>
<comment type="subcellular location">
    <subcellularLocation>
        <location evidence="2">Mitochondrion inner membrane</location>
        <topology evidence="2">Multi-pass membrane protein</topology>
    </subcellularLocation>
</comment>
<comment type="miscellaneous">
    <text evidence="1">Heme 1 (or BL or b562) is low-potential and absorbs at about 562 nm, and heme 2 (or BH or b566) is high-potential and absorbs at about 566 nm.</text>
</comment>
<comment type="similarity">
    <text evidence="3 4">Belongs to the cytochrome b family.</text>
</comment>
<comment type="caution">
    <text evidence="2">The full-length protein contains only eight transmembrane helices, not nine as predicted by bioinformatics tools.</text>
</comment>
<reference key="1">
    <citation type="submission" date="2003-09" db="EMBL/GenBank/DDBJ databases">
        <title>Molecular evidence for unrecognized biodiversity in the bat genus Micronycteris (Phyllostomidae), with descriptions of two new subgenera.</title>
        <authorList>
            <person name="Porter C.A."/>
            <person name="Hoofer S.R."/>
            <person name="Cline C.A."/>
            <person name="Hoffmann F.G."/>
            <person name="Baker R.J."/>
        </authorList>
    </citation>
    <scope>NUCLEOTIDE SEQUENCE [GENOMIC DNA]</scope>
</reference>
<accession>Q597E9</accession>
<organism>
    <name type="scientific">Glyphonycteris daviesi</name>
    <name type="common">Davies's big-eared bat</name>
    <name type="synonym">Micronycteris daviesi</name>
    <dbReference type="NCBI Taxonomy" id="148064"/>
    <lineage>
        <taxon>Eukaryota</taxon>
        <taxon>Metazoa</taxon>
        <taxon>Chordata</taxon>
        <taxon>Craniata</taxon>
        <taxon>Vertebrata</taxon>
        <taxon>Euteleostomi</taxon>
        <taxon>Mammalia</taxon>
        <taxon>Eutheria</taxon>
        <taxon>Laurasiatheria</taxon>
        <taxon>Chiroptera</taxon>
        <taxon>Yangochiroptera</taxon>
        <taxon>Phyllostomidae</taxon>
        <taxon>Phyllostominae</taxon>
        <taxon>Glyphonycteris</taxon>
    </lineage>
</organism>
<proteinExistence type="inferred from homology"/>
<gene>
    <name type="primary">MT-CYB</name>
    <name type="synonym">COB</name>
    <name type="synonym">CYTB</name>
    <name type="synonym">MTCYB</name>
</gene>